<dbReference type="EC" id="5.4.99.25" evidence="1"/>
<dbReference type="EMBL" id="CP000232">
    <property type="protein sequence ID" value="ABC19367.1"/>
    <property type="molecule type" value="Genomic_DNA"/>
</dbReference>
<dbReference type="RefSeq" id="YP_429910.1">
    <property type="nucleotide sequence ID" value="NC_007644.1"/>
</dbReference>
<dbReference type="SMR" id="Q2RJM2"/>
<dbReference type="STRING" id="264732.Moth_1053"/>
<dbReference type="EnsemblBacteria" id="ABC19367">
    <property type="protein sequence ID" value="ABC19367"/>
    <property type="gene ID" value="Moth_1053"/>
</dbReference>
<dbReference type="KEGG" id="mta:Moth_1053"/>
<dbReference type="PATRIC" id="fig|264732.11.peg.1133"/>
<dbReference type="eggNOG" id="COG0130">
    <property type="taxonomic scope" value="Bacteria"/>
</dbReference>
<dbReference type="HOGENOM" id="CLU_032087_0_1_9"/>
<dbReference type="OrthoDB" id="9802309at2"/>
<dbReference type="GO" id="GO:0003723">
    <property type="term" value="F:RNA binding"/>
    <property type="evidence" value="ECO:0007669"/>
    <property type="project" value="InterPro"/>
</dbReference>
<dbReference type="GO" id="GO:0160148">
    <property type="term" value="F:tRNA pseudouridine(55) synthase activity"/>
    <property type="evidence" value="ECO:0007669"/>
    <property type="project" value="UniProtKB-EC"/>
</dbReference>
<dbReference type="GO" id="GO:1990481">
    <property type="term" value="P:mRNA pseudouridine synthesis"/>
    <property type="evidence" value="ECO:0007669"/>
    <property type="project" value="TreeGrafter"/>
</dbReference>
<dbReference type="GO" id="GO:0031119">
    <property type="term" value="P:tRNA pseudouridine synthesis"/>
    <property type="evidence" value="ECO:0007669"/>
    <property type="project" value="UniProtKB-UniRule"/>
</dbReference>
<dbReference type="CDD" id="cd02573">
    <property type="entry name" value="PseudoU_synth_EcTruB"/>
    <property type="match status" value="1"/>
</dbReference>
<dbReference type="Gene3D" id="3.30.2350.10">
    <property type="entry name" value="Pseudouridine synthase"/>
    <property type="match status" value="1"/>
</dbReference>
<dbReference type="Gene3D" id="2.30.130.10">
    <property type="entry name" value="PUA domain"/>
    <property type="match status" value="1"/>
</dbReference>
<dbReference type="HAMAP" id="MF_01080">
    <property type="entry name" value="TruB_bact"/>
    <property type="match status" value="1"/>
</dbReference>
<dbReference type="InterPro" id="IPR020103">
    <property type="entry name" value="PsdUridine_synth_cat_dom_sf"/>
</dbReference>
<dbReference type="InterPro" id="IPR002501">
    <property type="entry name" value="PsdUridine_synth_N"/>
</dbReference>
<dbReference type="InterPro" id="IPR036974">
    <property type="entry name" value="PUA_sf"/>
</dbReference>
<dbReference type="InterPro" id="IPR014780">
    <property type="entry name" value="tRNA_psdUridine_synth_TruB"/>
</dbReference>
<dbReference type="InterPro" id="IPR032819">
    <property type="entry name" value="TruB_C"/>
</dbReference>
<dbReference type="NCBIfam" id="TIGR00431">
    <property type="entry name" value="TruB"/>
    <property type="match status" value="1"/>
</dbReference>
<dbReference type="PANTHER" id="PTHR13767:SF2">
    <property type="entry name" value="PSEUDOURIDYLATE SYNTHASE TRUB1"/>
    <property type="match status" value="1"/>
</dbReference>
<dbReference type="PANTHER" id="PTHR13767">
    <property type="entry name" value="TRNA-PSEUDOURIDINE SYNTHASE"/>
    <property type="match status" value="1"/>
</dbReference>
<dbReference type="Pfam" id="PF16198">
    <property type="entry name" value="TruB_C_2"/>
    <property type="match status" value="1"/>
</dbReference>
<dbReference type="Pfam" id="PF01509">
    <property type="entry name" value="TruB_N"/>
    <property type="match status" value="1"/>
</dbReference>
<dbReference type="SUPFAM" id="SSF55120">
    <property type="entry name" value="Pseudouridine synthase"/>
    <property type="match status" value="1"/>
</dbReference>
<proteinExistence type="inferred from homology"/>
<gene>
    <name evidence="1" type="primary">truB</name>
    <name type="ordered locus">Moth_1053</name>
</gene>
<name>TRUB_MOOTA</name>
<protein>
    <recommendedName>
        <fullName evidence="1">tRNA pseudouridine synthase B</fullName>
        <ecNumber evidence="1">5.4.99.25</ecNumber>
    </recommendedName>
    <alternativeName>
        <fullName evidence="1">tRNA pseudouridine(55) synthase</fullName>
        <shortName evidence="1">Psi55 synthase</shortName>
    </alternativeName>
    <alternativeName>
        <fullName evidence="1">tRNA pseudouridylate synthase</fullName>
    </alternativeName>
    <alternativeName>
        <fullName evidence="1">tRNA-uridine isomerase</fullName>
    </alternativeName>
</protein>
<feature type="chain" id="PRO_0000229361" description="tRNA pseudouridine synthase B">
    <location>
        <begin position="1"/>
        <end position="305"/>
    </location>
</feature>
<feature type="domain" description="PUA" evidence="1">
    <location>
        <begin position="237"/>
        <end position="305"/>
    </location>
</feature>
<feature type="active site" description="Nucleophile" evidence="1">
    <location>
        <position position="39"/>
    </location>
</feature>
<organism>
    <name type="scientific">Moorella thermoacetica (strain ATCC 39073 / JCM 9320)</name>
    <dbReference type="NCBI Taxonomy" id="264732"/>
    <lineage>
        <taxon>Bacteria</taxon>
        <taxon>Bacillati</taxon>
        <taxon>Bacillota</taxon>
        <taxon>Clostridia</taxon>
        <taxon>Moorellales</taxon>
        <taxon>Moorellaceae</taxon>
        <taxon>Moorella</taxon>
    </lineage>
</organism>
<reference key="1">
    <citation type="journal article" date="2008" name="Environ. Microbiol.">
        <title>The complete genome sequence of Moorella thermoacetica (f. Clostridium thermoaceticum).</title>
        <authorList>
            <person name="Pierce E."/>
            <person name="Xie G."/>
            <person name="Barabote R.D."/>
            <person name="Saunders E."/>
            <person name="Han C.S."/>
            <person name="Detter J.C."/>
            <person name="Richardson P."/>
            <person name="Brettin T.S."/>
            <person name="Das A."/>
            <person name="Ljungdahl L.G."/>
            <person name="Ragsdale S.W."/>
        </authorList>
    </citation>
    <scope>NUCLEOTIDE SEQUENCE [LARGE SCALE GENOMIC DNA]</scope>
    <source>
        <strain>ATCC 39073 / JCM 9320</strain>
    </source>
</reference>
<accession>Q2RJM2</accession>
<comment type="function">
    <text evidence="1">Responsible for synthesis of pseudouridine from uracil-55 in the psi GC loop of transfer RNAs.</text>
</comment>
<comment type="catalytic activity">
    <reaction evidence="1">
        <text>uridine(55) in tRNA = pseudouridine(55) in tRNA</text>
        <dbReference type="Rhea" id="RHEA:42532"/>
        <dbReference type="Rhea" id="RHEA-COMP:10101"/>
        <dbReference type="Rhea" id="RHEA-COMP:10102"/>
        <dbReference type="ChEBI" id="CHEBI:65314"/>
        <dbReference type="ChEBI" id="CHEBI:65315"/>
        <dbReference type="EC" id="5.4.99.25"/>
    </reaction>
</comment>
<comment type="similarity">
    <text evidence="1">Belongs to the pseudouridine synthase TruB family. Type 1 subfamily.</text>
</comment>
<evidence type="ECO:0000255" key="1">
    <source>
        <dbReference type="HAMAP-Rule" id="MF_01080"/>
    </source>
</evidence>
<keyword id="KW-0413">Isomerase</keyword>
<keyword id="KW-0819">tRNA processing</keyword>
<sequence>MVMGFVNVLKPPGLTSHDVVQNLRRLLKVKRIGHGGTLDPLAAGVLPVAVGTATRLLEYLQGGDKAYRAEFILGLKTDTQDLGGRVLARKPCPPFTEKDLQAATRPFTGTIRQVPPMVSAVHYQGRRLYELAREGLEVERPARQVTIHEFRLIRAWPDGPYYRALIDITCSRGTYIRTLGADWGDYLGVGATLAFLLRTRAGSFRLTDAWTLEEIAGAIDRGERTFLLPPAAGLAHLPVIIVPGEFIRHVSNGVAIKGDVCRPLPSLREGDIVRLETGEGQLLALARVEPDTRGSFLLKPHKVLK</sequence>